<dbReference type="EMBL" id="AK035718">
    <property type="protein sequence ID" value="BAC29166.1"/>
    <property type="molecule type" value="mRNA"/>
</dbReference>
<dbReference type="EMBL" id="AK050530">
    <property type="protein sequence ID" value="BAC34309.1"/>
    <property type="molecule type" value="mRNA"/>
</dbReference>
<dbReference type="EMBL" id="AK078765">
    <property type="protein sequence ID" value="BAC37381.1"/>
    <property type="molecule type" value="mRNA"/>
</dbReference>
<dbReference type="EMBL" id="BC002217">
    <property type="protein sequence ID" value="AAH02217.1"/>
    <property type="molecule type" value="mRNA"/>
</dbReference>
<dbReference type="CCDS" id="CCDS26379.1"/>
<dbReference type="RefSeq" id="NP_077793.1">
    <property type="nucleotide sequence ID" value="NM_024473.3"/>
</dbReference>
<dbReference type="FunCoup" id="Q99LU8">
    <property type="interactions" value="2601"/>
</dbReference>
<dbReference type="STRING" id="10090.ENSMUSP00000019276"/>
<dbReference type="PhosphoSitePlus" id="Q99LU8"/>
<dbReference type="PaxDb" id="10090-ENSMUSP00000019276"/>
<dbReference type="Antibodypedia" id="25335">
    <property type="antibodies" value="124 antibodies from 15 providers"/>
</dbReference>
<dbReference type="DNASU" id="79555"/>
<dbReference type="Ensembl" id="ENSMUST00000019276.12">
    <property type="protein sequence ID" value="ENSMUSP00000019276.5"/>
    <property type="gene ID" value="ENSMUSG00000019132.12"/>
</dbReference>
<dbReference type="GeneID" id="79555"/>
<dbReference type="KEGG" id="mmu:79555"/>
<dbReference type="UCSC" id="uc007pwi.1">
    <property type="organism name" value="mouse"/>
</dbReference>
<dbReference type="AGR" id="MGI:2441726"/>
<dbReference type="MGI" id="MGI:2441726">
    <property type="gene designation" value="BC005537"/>
</dbReference>
<dbReference type="VEuPathDB" id="HostDB:ENSMUSG00000019132"/>
<dbReference type="eggNOG" id="ENOG502QQ5Z">
    <property type="taxonomic scope" value="Eukaryota"/>
</dbReference>
<dbReference type="GeneTree" id="ENSGT00390000008115"/>
<dbReference type="HOGENOM" id="CLU_105473_0_0_1"/>
<dbReference type="InParanoid" id="Q99LU8"/>
<dbReference type="OMA" id="SMFLFVD"/>
<dbReference type="OrthoDB" id="9860094at2759"/>
<dbReference type="PhylomeDB" id="Q99LU8"/>
<dbReference type="TreeFam" id="TF329480"/>
<dbReference type="BioGRID-ORCS" id="79555">
    <property type="hits" value="0 hits in 77 CRISPR screens"/>
</dbReference>
<dbReference type="PRO" id="PR:Q99LU8"/>
<dbReference type="Proteomes" id="UP000000589">
    <property type="component" value="Chromosome 13"/>
</dbReference>
<dbReference type="RNAct" id="Q99LU8">
    <property type="molecule type" value="protein"/>
</dbReference>
<dbReference type="Bgee" id="ENSMUSG00000019132">
    <property type="expression patterns" value="Expressed in gonadal ridge and 254 other cell types or tissues"/>
</dbReference>
<dbReference type="ExpressionAtlas" id="Q99LU8">
    <property type="expression patterns" value="baseline and differential"/>
</dbReference>
<dbReference type="InterPro" id="IPR027903">
    <property type="entry name" value="DUF4566"/>
</dbReference>
<dbReference type="PANTHER" id="PTHR28336">
    <property type="entry name" value="BA1-643"/>
    <property type="match status" value="1"/>
</dbReference>
<dbReference type="PANTHER" id="PTHR28336:SF1">
    <property type="entry name" value="SIMILAR TO CDNA SEQUENCE BC005537"/>
    <property type="match status" value="1"/>
</dbReference>
<dbReference type="Pfam" id="PF15130">
    <property type="entry name" value="DUF4566"/>
    <property type="match status" value="1"/>
</dbReference>
<keyword id="KW-1185">Reference proteome</keyword>
<reference key="1">
    <citation type="journal article" date="2005" name="Science">
        <title>The transcriptional landscape of the mammalian genome.</title>
        <authorList>
            <person name="Carninci P."/>
            <person name="Kasukawa T."/>
            <person name="Katayama S."/>
            <person name="Gough J."/>
            <person name="Frith M.C."/>
            <person name="Maeda N."/>
            <person name="Oyama R."/>
            <person name="Ravasi T."/>
            <person name="Lenhard B."/>
            <person name="Wells C."/>
            <person name="Kodzius R."/>
            <person name="Shimokawa K."/>
            <person name="Bajic V.B."/>
            <person name="Brenner S.E."/>
            <person name="Batalov S."/>
            <person name="Forrest A.R."/>
            <person name="Zavolan M."/>
            <person name="Davis M.J."/>
            <person name="Wilming L.G."/>
            <person name="Aidinis V."/>
            <person name="Allen J.E."/>
            <person name="Ambesi-Impiombato A."/>
            <person name="Apweiler R."/>
            <person name="Aturaliya R.N."/>
            <person name="Bailey T.L."/>
            <person name="Bansal M."/>
            <person name="Baxter L."/>
            <person name="Beisel K.W."/>
            <person name="Bersano T."/>
            <person name="Bono H."/>
            <person name="Chalk A.M."/>
            <person name="Chiu K.P."/>
            <person name="Choudhary V."/>
            <person name="Christoffels A."/>
            <person name="Clutterbuck D.R."/>
            <person name="Crowe M.L."/>
            <person name="Dalla E."/>
            <person name="Dalrymple B.P."/>
            <person name="de Bono B."/>
            <person name="Della Gatta G."/>
            <person name="di Bernardo D."/>
            <person name="Down T."/>
            <person name="Engstrom P."/>
            <person name="Fagiolini M."/>
            <person name="Faulkner G."/>
            <person name="Fletcher C.F."/>
            <person name="Fukushima T."/>
            <person name="Furuno M."/>
            <person name="Futaki S."/>
            <person name="Gariboldi M."/>
            <person name="Georgii-Hemming P."/>
            <person name="Gingeras T.R."/>
            <person name="Gojobori T."/>
            <person name="Green R.E."/>
            <person name="Gustincich S."/>
            <person name="Harbers M."/>
            <person name="Hayashi Y."/>
            <person name="Hensch T.K."/>
            <person name="Hirokawa N."/>
            <person name="Hill D."/>
            <person name="Huminiecki L."/>
            <person name="Iacono M."/>
            <person name="Ikeo K."/>
            <person name="Iwama A."/>
            <person name="Ishikawa T."/>
            <person name="Jakt M."/>
            <person name="Kanapin A."/>
            <person name="Katoh M."/>
            <person name="Kawasawa Y."/>
            <person name="Kelso J."/>
            <person name="Kitamura H."/>
            <person name="Kitano H."/>
            <person name="Kollias G."/>
            <person name="Krishnan S.P."/>
            <person name="Kruger A."/>
            <person name="Kummerfeld S.K."/>
            <person name="Kurochkin I.V."/>
            <person name="Lareau L.F."/>
            <person name="Lazarevic D."/>
            <person name="Lipovich L."/>
            <person name="Liu J."/>
            <person name="Liuni S."/>
            <person name="McWilliam S."/>
            <person name="Madan Babu M."/>
            <person name="Madera M."/>
            <person name="Marchionni L."/>
            <person name="Matsuda H."/>
            <person name="Matsuzawa S."/>
            <person name="Miki H."/>
            <person name="Mignone F."/>
            <person name="Miyake S."/>
            <person name="Morris K."/>
            <person name="Mottagui-Tabar S."/>
            <person name="Mulder N."/>
            <person name="Nakano N."/>
            <person name="Nakauchi H."/>
            <person name="Ng P."/>
            <person name="Nilsson R."/>
            <person name="Nishiguchi S."/>
            <person name="Nishikawa S."/>
            <person name="Nori F."/>
            <person name="Ohara O."/>
            <person name="Okazaki Y."/>
            <person name="Orlando V."/>
            <person name="Pang K.C."/>
            <person name="Pavan W.J."/>
            <person name="Pavesi G."/>
            <person name="Pesole G."/>
            <person name="Petrovsky N."/>
            <person name="Piazza S."/>
            <person name="Reed J."/>
            <person name="Reid J.F."/>
            <person name="Ring B.Z."/>
            <person name="Ringwald M."/>
            <person name="Rost B."/>
            <person name="Ruan Y."/>
            <person name="Salzberg S.L."/>
            <person name="Sandelin A."/>
            <person name="Schneider C."/>
            <person name="Schoenbach C."/>
            <person name="Sekiguchi K."/>
            <person name="Semple C.A."/>
            <person name="Seno S."/>
            <person name="Sessa L."/>
            <person name="Sheng Y."/>
            <person name="Shibata Y."/>
            <person name="Shimada H."/>
            <person name="Shimada K."/>
            <person name="Silva D."/>
            <person name="Sinclair B."/>
            <person name="Sperling S."/>
            <person name="Stupka E."/>
            <person name="Sugiura K."/>
            <person name="Sultana R."/>
            <person name="Takenaka Y."/>
            <person name="Taki K."/>
            <person name="Tammoja K."/>
            <person name="Tan S.L."/>
            <person name="Tang S."/>
            <person name="Taylor M.S."/>
            <person name="Tegner J."/>
            <person name="Teichmann S.A."/>
            <person name="Ueda H.R."/>
            <person name="van Nimwegen E."/>
            <person name="Verardo R."/>
            <person name="Wei C.L."/>
            <person name="Yagi K."/>
            <person name="Yamanishi H."/>
            <person name="Zabarovsky E."/>
            <person name="Zhu S."/>
            <person name="Zimmer A."/>
            <person name="Hide W."/>
            <person name="Bult C."/>
            <person name="Grimmond S.M."/>
            <person name="Teasdale R.D."/>
            <person name="Liu E.T."/>
            <person name="Brusic V."/>
            <person name="Quackenbush J."/>
            <person name="Wahlestedt C."/>
            <person name="Mattick J.S."/>
            <person name="Hume D.A."/>
            <person name="Kai C."/>
            <person name="Sasaki D."/>
            <person name="Tomaru Y."/>
            <person name="Fukuda S."/>
            <person name="Kanamori-Katayama M."/>
            <person name="Suzuki M."/>
            <person name="Aoki J."/>
            <person name="Arakawa T."/>
            <person name="Iida J."/>
            <person name="Imamura K."/>
            <person name="Itoh M."/>
            <person name="Kato T."/>
            <person name="Kawaji H."/>
            <person name="Kawagashira N."/>
            <person name="Kawashima T."/>
            <person name="Kojima M."/>
            <person name="Kondo S."/>
            <person name="Konno H."/>
            <person name="Nakano K."/>
            <person name="Ninomiya N."/>
            <person name="Nishio T."/>
            <person name="Okada M."/>
            <person name="Plessy C."/>
            <person name="Shibata K."/>
            <person name="Shiraki T."/>
            <person name="Suzuki S."/>
            <person name="Tagami M."/>
            <person name="Waki K."/>
            <person name="Watahiki A."/>
            <person name="Okamura-Oho Y."/>
            <person name="Suzuki H."/>
            <person name="Kawai J."/>
            <person name="Hayashizaki Y."/>
        </authorList>
    </citation>
    <scope>NUCLEOTIDE SEQUENCE [LARGE SCALE MRNA]</scope>
    <source>
        <strain>C57BL/6J</strain>
        <tissue>Pancreas</tissue>
        <tissue>Testis</tissue>
        <tissue>Urinary bladder</tissue>
    </source>
</reference>
<reference key="2">
    <citation type="journal article" date="2004" name="Genome Res.">
        <title>The status, quality, and expansion of the NIH full-length cDNA project: the Mammalian Gene Collection (MGC).</title>
        <authorList>
            <consortium name="The MGC Project Team"/>
        </authorList>
    </citation>
    <scope>NUCLEOTIDE SEQUENCE [LARGE SCALE MRNA]</scope>
</reference>
<name>CF062_MOUSE</name>
<proteinExistence type="evidence at transcript level"/>
<feature type="chain" id="PRO_0000089515" description="Uncharacterized protein C6orf62 homolog">
    <location>
        <begin position="1"/>
        <end position="229"/>
    </location>
</feature>
<sequence>MGDPNSRKKQALNRLRAQLRKKKESLADQFDFKMYIAFVFKEKKKKSALFEVSEVIPVMTNNYEENILKGVRDSSYSLESSLELLQKDVVQLHAPRYQSMRRDVIGCTQEMDFILWPRNDIEKIVCLLFSRWKESDEPFRPVQAKFEFHHGDYEKQFLHVLSRKDKTGIVVNNPNQSVFLFIDRQHLQTPKNKATIFKLCSICLYLPQEQLTHWAVGTIEDHLRPYMPE</sequence>
<organism>
    <name type="scientific">Mus musculus</name>
    <name type="common">Mouse</name>
    <dbReference type="NCBI Taxonomy" id="10090"/>
    <lineage>
        <taxon>Eukaryota</taxon>
        <taxon>Metazoa</taxon>
        <taxon>Chordata</taxon>
        <taxon>Craniata</taxon>
        <taxon>Vertebrata</taxon>
        <taxon>Euteleostomi</taxon>
        <taxon>Mammalia</taxon>
        <taxon>Eutheria</taxon>
        <taxon>Euarchontoglires</taxon>
        <taxon>Glires</taxon>
        <taxon>Rodentia</taxon>
        <taxon>Myomorpha</taxon>
        <taxon>Muroidea</taxon>
        <taxon>Muridae</taxon>
        <taxon>Murinae</taxon>
        <taxon>Mus</taxon>
        <taxon>Mus</taxon>
    </lineage>
</organism>
<protein>
    <recommendedName>
        <fullName>Uncharacterized protein C6orf62 homolog</fullName>
    </recommendedName>
</protein>
<accession>Q99LU8</accession>